<proteinExistence type="inferred from homology"/>
<keyword id="KW-0150">Chloroplast</keyword>
<keyword id="KW-0934">Plastid</keyword>
<keyword id="KW-0687">Ribonucleoprotein</keyword>
<keyword id="KW-0689">Ribosomal protein</keyword>
<keyword id="KW-0694">RNA-binding</keyword>
<keyword id="KW-0699">rRNA-binding</keyword>
<comment type="function">
    <text evidence="1">Binds to 23S rRNA.</text>
</comment>
<comment type="subunit">
    <text evidence="1">Part of the 50S ribosomal subunit.</text>
</comment>
<comment type="subcellular location">
    <subcellularLocation>
        <location>Plastid</location>
        <location>Chloroplast</location>
    </subcellularLocation>
</comment>
<comment type="similarity">
    <text evidence="1">Belongs to the universal ribosomal protein uL14 family.</text>
</comment>
<reference key="1">
    <citation type="submission" date="2007-03" db="EMBL/GenBank/DDBJ databases">
        <title>Sequencing analysis of Barbarea verna chloroplast DNA.</title>
        <authorList>
            <person name="Hosouchi T."/>
            <person name="Tsuruoka H."/>
            <person name="Kotani H."/>
        </authorList>
    </citation>
    <scope>NUCLEOTIDE SEQUENCE [LARGE SCALE GENOMIC DNA]</scope>
</reference>
<dbReference type="EMBL" id="AP009370">
    <property type="protein sequence ID" value="BAF50146.1"/>
    <property type="molecule type" value="Genomic_DNA"/>
</dbReference>
<dbReference type="RefSeq" id="YP_001123322.1">
    <property type="nucleotide sequence ID" value="NC_009269.1"/>
</dbReference>
<dbReference type="SMR" id="A4QKE1"/>
<dbReference type="GeneID" id="4961950"/>
<dbReference type="GO" id="GO:0009507">
    <property type="term" value="C:chloroplast"/>
    <property type="evidence" value="ECO:0007669"/>
    <property type="project" value="UniProtKB-SubCell"/>
</dbReference>
<dbReference type="GO" id="GO:0022625">
    <property type="term" value="C:cytosolic large ribosomal subunit"/>
    <property type="evidence" value="ECO:0007669"/>
    <property type="project" value="TreeGrafter"/>
</dbReference>
<dbReference type="GO" id="GO:0070180">
    <property type="term" value="F:large ribosomal subunit rRNA binding"/>
    <property type="evidence" value="ECO:0007669"/>
    <property type="project" value="TreeGrafter"/>
</dbReference>
<dbReference type="GO" id="GO:0003735">
    <property type="term" value="F:structural constituent of ribosome"/>
    <property type="evidence" value="ECO:0007669"/>
    <property type="project" value="InterPro"/>
</dbReference>
<dbReference type="GO" id="GO:0006412">
    <property type="term" value="P:translation"/>
    <property type="evidence" value="ECO:0007669"/>
    <property type="project" value="UniProtKB-UniRule"/>
</dbReference>
<dbReference type="CDD" id="cd00337">
    <property type="entry name" value="Ribosomal_uL14"/>
    <property type="match status" value="1"/>
</dbReference>
<dbReference type="FunFam" id="2.40.150.20:FF:000002">
    <property type="entry name" value="50S ribosomal protein L14, chloroplastic"/>
    <property type="match status" value="1"/>
</dbReference>
<dbReference type="Gene3D" id="2.40.150.20">
    <property type="entry name" value="Ribosomal protein L14"/>
    <property type="match status" value="1"/>
</dbReference>
<dbReference type="HAMAP" id="MF_01367">
    <property type="entry name" value="Ribosomal_uL14"/>
    <property type="match status" value="1"/>
</dbReference>
<dbReference type="InterPro" id="IPR000218">
    <property type="entry name" value="Ribosomal_uL14"/>
</dbReference>
<dbReference type="InterPro" id="IPR005745">
    <property type="entry name" value="Ribosomal_uL14_bac-type"/>
</dbReference>
<dbReference type="InterPro" id="IPR019972">
    <property type="entry name" value="Ribosomal_uL14_CS"/>
</dbReference>
<dbReference type="InterPro" id="IPR036853">
    <property type="entry name" value="Ribosomal_uL14_sf"/>
</dbReference>
<dbReference type="NCBIfam" id="TIGR01067">
    <property type="entry name" value="rplN_bact"/>
    <property type="match status" value="1"/>
</dbReference>
<dbReference type="PANTHER" id="PTHR11761">
    <property type="entry name" value="50S/60S RIBOSOMAL PROTEIN L14/L23"/>
    <property type="match status" value="1"/>
</dbReference>
<dbReference type="PANTHER" id="PTHR11761:SF3">
    <property type="entry name" value="LARGE RIBOSOMAL SUBUNIT PROTEIN UL14M"/>
    <property type="match status" value="1"/>
</dbReference>
<dbReference type="Pfam" id="PF00238">
    <property type="entry name" value="Ribosomal_L14"/>
    <property type="match status" value="1"/>
</dbReference>
<dbReference type="SMART" id="SM01374">
    <property type="entry name" value="Ribosomal_L14"/>
    <property type="match status" value="1"/>
</dbReference>
<dbReference type="SUPFAM" id="SSF50193">
    <property type="entry name" value="Ribosomal protein L14"/>
    <property type="match status" value="1"/>
</dbReference>
<dbReference type="PROSITE" id="PS00049">
    <property type="entry name" value="RIBOSOMAL_L14"/>
    <property type="match status" value="1"/>
</dbReference>
<feature type="chain" id="PRO_0000355861" description="Large ribosomal subunit protein uL14c">
    <location>
        <begin position="1"/>
        <end position="122"/>
    </location>
</feature>
<protein>
    <recommendedName>
        <fullName evidence="1">Large ribosomal subunit protein uL14c</fullName>
    </recommendedName>
    <alternativeName>
        <fullName evidence="2">50S ribosomal protein L14, chloroplastic</fullName>
    </alternativeName>
</protein>
<sequence>MIQPQTYLNVADNSGARELMCIRIIGASNRRYAHIGDVIVAVIKEAIPNTPLERSEVIRAVIVRTCKELKRNNGTIIRYDDNAAVVIDQEGNPKGTRVFGAIPRELRQLNFTKIVSLAPEVL</sequence>
<organism>
    <name type="scientific">Barbarea verna</name>
    <name type="common">Land cress</name>
    <name type="synonym">Erysimum vernum</name>
    <dbReference type="NCBI Taxonomy" id="50458"/>
    <lineage>
        <taxon>Eukaryota</taxon>
        <taxon>Viridiplantae</taxon>
        <taxon>Streptophyta</taxon>
        <taxon>Embryophyta</taxon>
        <taxon>Tracheophyta</taxon>
        <taxon>Spermatophyta</taxon>
        <taxon>Magnoliopsida</taxon>
        <taxon>eudicotyledons</taxon>
        <taxon>Gunneridae</taxon>
        <taxon>Pentapetalae</taxon>
        <taxon>rosids</taxon>
        <taxon>malvids</taxon>
        <taxon>Brassicales</taxon>
        <taxon>Brassicaceae</taxon>
        <taxon>Cardamineae</taxon>
        <taxon>Barbarea</taxon>
    </lineage>
</organism>
<accession>A4QKE1</accession>
<gene>
    <name evidence="1" type="primary">rpl14</name>
</gene>
<geneLocation type="chloroplast"/>
<name>RK14_BARVE</name>
<evidence type="ECO:0000255" key="1">
    <source>
        <dbReference type="HAMAP-Rule" id="MF_01367"/>
    </source>
</evidence>
<evidence type="ECO:0000305" key="2"/>